<feature type="chain" id="PRO_0000172341" description="Large ribosomal subunit protein bL32B">
    <location>
        <begin position="1"/>
        <end position="59"/>
    </location>
</feature>
<dbReference type="EMBL" id="AF454824">
    <property type="protein sequence ID" value="AAM75307.1"/>
    <property type="molecule type" value="Genomic_DNA"/>
</dbReference>
<dbReference type="EMBL" id="AE016830">
    <property type="protein sequence ID" value="AAO80422.1"/>
    <property type="molecule type" value="Genomic_DNA"/>
</dbReference>
<dbReference type="RefSeq" id="NP_814351.1">
    <property type="nucleotide sequence ID" value="NC_004668.1"/>
</dbReference>
<dbReference type="SMR" id="Q7C3P5"/>
<dbReference type="STRING" id="226185.EF_0586"/>
<dbReference type="EnsemblBacteria" id="AAO80422">
    <property type="protein sequence ID" value="AAO80422"/>
    <property type="gene ID" value="EF_0586"/>
</dbReference>
<dbReference type="KEGG" id="efa:EF0586"/>
<dbReference type="PATRIC" id="fig|226185.45.peg.2529"/>
<dbReference type="eggNOG" id="COG0333">
    <property type="taxonomic scope" value="Bacteria"/>
</dbReference>
<dbReference type="HOGENOM" id="CLU_129084_2_0_9"/>
<dbReference type="PRO" id="PR:Q7C3P5"/>
<dbReference type="Proteomes" id="UP000001415">
    <property type="component" value="Chromosome"/>
</dbReference>
<dbReference type="GO" id="GO:0015934">
    <property type="term" value="C:large ribosomal subunit"/>
    <property type="evidence" value="ECO:0007669"/>
    <property type="project" value="InterPro"/>
</dbReference>
<dbReference type="GO" id="GO:0003735">
    <property type="term" value="F:structural constituent of ribosome"/>
    <property type="evidence" value="ECO:0007669"/>
    <property type="project" value="InterPro"/>
</dbReference>
<dbReference type="GO" id="GO:0006412">
    <property type="term" value="P:translation"/>
    <property type="evidence" value="ECO:0007669"/>
    <property type="project" value="UniProtKB-UniRule"/>
</dbReference>
<dbReference type="HAMAP" id="MF_00340">
    <property type="entry name" value="Ribosomal_bL32"/>
    <property type="match status" value="1"/>
</dbReference>
<dbReference type="InterPro" id="IPR002677">
    <property type="entry name" value="Ribosomal_bL32"/>
</dbReference>
<dbReference type="InterPro" id="IPR044957">
    <property type="entry name" value="Ribosomal_bL32_bact"/>
</dbReference>
<dbReference type="InterPro" id="IPR011332">
    <property type="entry name" value="Ribosomal_zn-bd"/>
</dbReference>
<dbReference type="NCBIfam" id="TIGR01031">
    <property type="entry name" value="rpmF_bact"/>
    <property type="match status" value="1"/>
</dbReference>
<dbReference type="PANTHER" id="PTHR35534">
    <property type="entry name" value="50S RIBOSOMAL PROTEIN L32"/>
    <property type="match status" value="1"/>
</dbReference>
<dbReference type="PANTHER" id="PTHR35534:SF1">
    <property type="entry name" value="LARGE RIBOSOMAL SUBUNIT PROTEIN BL32"/>
    <property type="match status" value="1"/>
</dbReference>
<dbReference type="Pfam" id="PF01783">
    <property type="entry name" value="Ribosomal_L32p"/>
    <property type="match status" value="1"/>
</dbReference>
<dbReference type="SUPFAM" id="SSF57829">
    <property type="entry name" value="Zn-binding ribosomal proteins"/>
    <property type="match status" value="1"/>
</dbReference>
<name>RL322_ENTFA</name>
<evidence type="ECO:0000255" key="1">
    <source>
        <dbReference type="HAMAP-Rule" id="MF_00340"/>
    </source>
</evidence>
<evidence type="ECO:0000305" key="2"/>
<protein>
    <recommendedName>
        <fullName evidence="1">Large ribosomal subunit protein bL32B</fullName>
    </recommendedName>
    <alternativeName>
        <fullName evidence="2">50S ribosomal protein L32 2</fullName>
    </alternativeName>
</protein>
<keyword id="KW-1185">Reference proteome</keyword>
<keyword id="KW-0687">Ribonucleoprotein</keyword>
<keyword id="KW-0689">Ribosomal protein</keyword>
<reference key="1">
    <citation type="journal article" date="2002" name="Nature">
        <title>Modulation of virulence within a pathogenicity island in vancomycin-resistant Enterococcus faecalis.</title>
        <authorList>
            <person name="Shankar N."/>
            <person name="Baghdayan A.S."/>
            <person name="Gilmore M.S."/>
        </authorList>
    </citation>
    <scope>NUCLEOTIDE SEQUENCE [GENOMIC DNA]</scope>
</reference>
<reference key="2">
    <citation type="journal article" date="2003" name="Science">
        <title>Role of mobile DNA in the evolution of vancomycin-resistant Enterococcus faecalis.</title>
        <authorList>
            <person name="Paulsen I.T."/>
            <person name="Banerjei L."/>
            <person name="Myers G.S.A."/>
            <person name="Nelson K.E."/>
            <person name="Seshadri R."/>
            <person name="Read T.D."/>
            <person name="Fouts D.E."/>
            <person name="Eisen J.A."/>
            <person name="Gill S.R."/>
            <person name="Heidelberg J.F."/>
            <person name="Tettelin H."/>
            <person name="Dodson R.J."/>
            <person name="Umayam L.A."/>
            <person name="Brinkac L.M."/>
            <person name="Beanan M.J."/>
            <person name="Daugherty S.C."/>
            <person name="DeBoy R.T."/>
            <person name="Durkin S.A."/>
            <person name="Kolonay J.F."/>
            <person name="Madupu R."/>
            <person name="Nelson W.C."/>
            <person name="Vamathevan J.J."/>
            <person name="Tran B."/>
            <person name="Upton J."/>
            <person name="Hansen T."/>
            <person name="Shetty J."/>
            <person name="Khouri H.M."/>
            <person name="Utterback T.R."/>
            <person name="Radune D."/>
            <person name="Ketchum K.A."/>
            <person name="Dougherty B.A."/>
            <person name="Fraser C.M."/>
        </authorList>
    </citation>
    <scope>NUCLEOTIDE SEQUENCE [LARGE SCALE GENOMIC DNA]</scope>
    <source>
        <strain>ATCC 700802 / V583</strain>
    </source>
</reference>
<sequence>MAVPARKTSKAKKRLRRTHQTVVKPEISFDEANGDYRRSHHVSLKGYYNGKKVIKGASK</sequence>
<proteinExistence type="inferred from homology"/>
<accession>Q7C3P5</accession>
<accession>Q8KU57</accession>
<gene>
    <name type="primary">rpmF2</name>
    <name type="synonym">rpmF-2</name>
    <name type="ordered locus">EF_0586</name>
    <name type="ORF">ef-0104</name>
</gene>
<organism>
    <name type="scientific">Enterococcus faecalis (strain ATCC 700802 / V583)</name>
    <dbReference type="NCBI Taxonomy" id="226185"/>
    <lineage>
        <taxon>Bacteria</taxon>
        <taxon>Bacillati</taxon>
        <taxon>Bacillota</taxon>
        <taxon>Bacilli</taxon>
        <taxon>Lactobacillales</taxon>
        <taxon>Enterococcaceae</taxon>
        <taxon>Enterococcus</taxon>
    </lineage>
</organism>
<comment type="similarity">
    <text evidence="2">Belongs to the bacterial ribosomal protein bL32 family.</text>
</comment>